<evidence type="ECO:0000255" key="1">
    <source>
        <dbReference type="HAMAP-Rule" id="MF_01390"/>
    </source>
</evidence>
<protein>
    <recommendedName>
        <fullName evidence="1">Maturase K</fullName>
    </recommendedName>
    <alternativeName>
        <fullName evidence="1">Intron maturase</fullName>
    </alternativeName>
</protein>
<geneLocation type="chloroplast"/>
<feature type="chain" id="PRO_0000143595" description="Maturase K">
    <location>
        <begin position="1"/>
        <end position="515"/>
    </location>
</feature>
<accession>Q6YP18</accession>
<sequence>MDEFHRYGKEDSSWQQCFLYPLFFQEDLYAISHDHYLDGSSSSEPMEHLSSNDQFSFLTVKRLIGQIRQQNHSIVLFVNCDPNPLVDRKKSSYSESVLEGLTLVLEVPFSIRSKYSVEGMNEWKSFRSIHSIFPFLEDKFPHSNYVSDTRIPYSIHPEILVRTFRRWIGDAPSLHPLRSILYEYRNSSESLQRSIIVVPKVNTRFFLFLWNNYVYECESILVSLLKRSSHSRSLSHGSFPQRTHFHRKIKNIFLFSRRNSFQSIWSLKDPNIHYVRYGERSIIAIKGTNLLVKKYRYYLPIFRQCYFHLWNEPYRVCSHQLSKNCSSSLGYFLRFRMKPLLVKTKMLDELFIADLITDEFDPIVPIVPIIGLLSREKFCDISGRPISKLSWTSLTDDDILDRFDRIWRNLFHYYSGSFGRDGLYRIKYILSLSCAKTLACKHKSTIRVVRKELGPELFKKSFSKERELDSPPFSSKAAARSQRERIWHSDIPQINPLAHSWQKIQDLKIENLFDQ</sequence>
<keyword id="KW-0150">Chloroplast</keyword>
<keyword id="KW-0507">mRNA processing</keyword>
<keyword id="KW-0934">Plastid</keyword>
<keyword id="KW-0694">RNA-binding</keyword>
<keyword id="KW-0819">tRNA processing</keyword>
<dbReference type="EMBL" id="AY035196">
    <property type="protein sequence ID" value="AAK61804.1"/>
    <property type="molecule type" value="Genomic_DNA"/>
</dbReference>
<dbReference type="RefSeq" id="YP_009561130.1">
    <property type="nucleotide sequence ID" value="NC_041067.1"/>
</dbReference>
<dbReference type="GeneID" id="39330125"/>
<dbReference type="GO" id="GO:0009507">
    <property type="term" value="C:chloroplast"/>
    <property type="evidence" value="ECO:0007669"/>
    <property type="project" value="UniProtKB-SubCell"/>
</dbReference>
<dbReference type="GO" id="GO:0003723">
    <property type="term" value="F:RNA binding"/>
    <property type="evidence" value="ECO:0007669"/>
    <property type="project" value="UniProtKB-KW"/>
</dbReference>
<dbReference type="GO" id="GO:0006397">
    <property type="term" value="P:mRNA processing"/>
    <property type="evidence" value="ECO:0007669"/>
    <property type="project" value="UniProtKB-KW"/>
</dbReference>
<dbReference type="GO" id="GO:0008380">
    <property type="term" value="P:RNA splicing"/>
    <property type="evidence" value="ECO:0007669"/>
    <property type="project" value="UniProtKB-UniRule"/>
</dbReference>
<dbReference type="GO" id="GO:0008033">
    <property type="term" value="P:tRNA processing"/>
    <property type="evidence" value="ECO:0007669"/>
    <property type="project" value="UniProtKB-KW"/>
</dbReference>
<dbReference type="HAMAP" id="MF_01390">
    <property type="entry name" value="MatK"/>
    <property type="match status" value="1"/>
</dbReference>
<dbReference type="InterPro" id="IPR024937">
    <property type="entry name" value="Domain_X"/>
</dbReference>
<dbReference type="InterPro" id="IPR002866">
    <property type="entry name" value="Maturase_MatK"/>
</dbReference>
<dbReference type="InterPro" id="IPR024942">
    <property type="entry name" value="Maturase_MatK_N"/>
</dbReference>
<dbReference type="PANTHER" id="PTHR34811">
    <property type="entry name" value="MATURASE K"/>
    <property type="match status" value="1"/>
</dbReference>
<dbReference type="PANTHER" id="PTHR34811:SF1">
    <property type="entry name" value="MATURASE K"/>
    <property type="match status" value="1"/>
</dbReference>
<dbReference type="Pfam" id="PF01348">
    <property type="entry name" value="Intron_maturas2"/>
    <property type="match status" value="1"/>
</dbReference>
<dbReference type="Pfam" id="PF01824">
    <property type="entry name" value="MatK_N"/>
    <property type="match status" value="1"/>
</dbReference>
<name>MATK_PICEN</name>
<organism>
    <name type="scientific">Picea engelmannii</name>
    <name type="common">Engelmann's spruce</name>
    <name type="synonym">Abies engelmannii</name>
    <dbReference type="NCBI Taxonomy" id="3334"/>
    <lineage>
        <taxon>Eukaryota</taxon>
        <taxon>Viridiplantae</taxon>
        <taxon>Streptophyta</taxon>
        <taxon>Embryophyta</taxon>
        <taxon>Tracheophyta</taxon>
        <taxon>Spermatophyta</taxon>
        <taxon>Pinopsida</taxon>
        <taxon>Pinidae</taxon>
        <taxon>Conifers I</taxon>
        <taxon>Pinales</taxon>
        <taxon>Pinaceae</taxon>
        <taxon>Picea</taxon>
    </lineage>
</organism>
<reference key="1">
    <citation type="submission" date="2001-05" db="EMBL/GenBank/DDBJ databases">
        <title>Phylogenetic analysis of Picea species based on chloroplast and mitochondrial gene sequences.</title>
        <authorList>
            <person name="Germano J."/>
            <person name="Thorner A.R."/>
            <person name="Klein A.S."/>
        </authorList>
    </citation>
    <scope>NUCLEOTIDE SEQUENCE [GENOMIC DNA]</scope>
</reference>
<comment type="function">
    <text evidence="1">Usually encoded in the trnK tRNA gene intron. Probably assists in splicing its own and other chloroplast group II introns.</text>
</comment>
<comment type="subcellular location">
    <subcellularLocation>
        <location>Plastid</location>
        <location>Chloroplast</location>
    </subcellularLocation>
</comment>
<comment type="similarity">
    <text evidence="1">Belongs to the intron maturase 2 family. MatK subfamily.</text>
</comment>
<gene>
    <name evidence="1" type="primary">matK</name>
</gene>
<proteinExistence type="inferred from homology"/>